<keyword id="KW-0025">Alternative splicing</keyword>
<keyword id="KW-0106">Calcium</keyword>
<keyword id="KW-0963">Cytoplasm</keyword>
<keyword id="KW-0967">Endosome</keyword>
<keyword id="KW-0378">Hydrolase</keyword>
<keyword id="KW-0442">Lipid degradation</keyword>
<keyword id="KW-0443">Lipid metabolism</keyword>
<keyword id="KW-0472">Membrane</keyword>
<keyword id="KW-0479">Metal-binding</keyword>
<keyword id="KW-0496">Mitochondrion</keyword>
<keyword id="KW-1267">Proteomics identification</keyword>
<keyword id="KW-1185">Reference proteome</keyword>
<comment type="function">
    <text evidence="4 5 7">Calcium-dependent phospholipase A1 and A2 and lysophospholipase that may play a role in membrane phospholipid remodeling.</text>
</comment>
<comment type="function">
    <molecule>Isoform 3</molecule>
    <text evidence="7">Calcium-dependent phospholipase A2 and lysophospholipase. Cleaves the ester bond of the fatty acyl group attached to the sn-2 position of phosphatidylethanolamines, producing lysophospholipids that may be used in deacylation-reacylation cycles. Hydrolyzes lysophosphatidylcholines with low efficiency but is inefficient toward phosphatidylcholines.</text>
</comment>
<comment type="function">
    <molecule>Isoform 5</molecule>
    <text evidence="4 5 7">Calcium-dependent phospholipase A1 and A2 and lysophospholipase. Cleaves the ester bond of the fatty acyl group attached to the sn-1 or sn-2 position of diacyl phospholipids (phospholipase A1 and A2 activity, respectively), producing lysophospholipids that may be used in deacylation-reacylation cycles. Can further hydrolyze lysophospholipids enabling complete deacylation. Has no activity toward alkylacyl phospholipids.</text>
</comment>
<comment type="catalytic activity">
    <molecule>Isoform 5</molecule>
    <reaction evidence="4 5 7">
        <text>a 1,2-diacyl-sn-glycero-3-phosphocholine + H2O = a 1-acyl-sn-glycero-3-phosphocholine + a fatty acid + H(+)</text>
        <dbReference type="Rhea" id="RHEA:15801"/>
        <dbReference type="ChEBI" id="CHEBI:15377"/>
        <dbReference type="ChEBI" id="CHEBI:15378"/>
        <dbReference type="ChEBI" id="CHEBI:28868"/>
        <dbReference type="ChEBI" id="CHEBI:57643"/>
        <dbReference type="ChEBI" id="CHEBI:58168"/>
        <dbReference type="EC" id="3.1.1.4"/>
    </reaction>
    <physiologicalReaction direction="left-to-right" evidence="13 14 15">
        <dbReference type="Rhea" id="RHEA:15802"/>
    </physiologicalReaction>
</comment>
<comment type="catalytic activity">
    <reaction evidence="5 7">
        <text>a 1-acyl-sn-glycero-3-phosphocholine + H2O = sn-glycerol 3-phosphocholine + a fatty acid + H(+)</text>
        <dbReference type="Rhea" id="RHEA:15177"/>
        <dbReference type="ChEBI" id="CHEBI:15377"/>
        <dbReference type="ChEBI" id="CHEBI:15378"/>
        <dbReference type="ChEBI" id="CHEBI:16870"/>
        <dbReference type="ChEBI" id="CHEBI:28868"/>
        <dbReference type="ChEBI" id="CHEBI:58168"/>
        <dbReference type="EC" id="3.1.1.5"/>
    </reaction>
    <physiologicalReaction direction="left-to-right" evidence="14 15">
        <dbReference type="Rhea" id="RHEA:15178"/>
    </physiologicalReaction>
</comment>
<comment type="catalytic activity">
    <molecule>Isoform 3</molecule>
    <reaction evidence="7">
        <text>1-hexadecanoyl-2-(9Z,12Z-octadecadienoyl)-sn-glycero-3-phosphoethanolamine + H2O = 1-hexadecanoyl-sn-glycero-3-phosphoethanolamine + (9Z,12Z)-octadecadienoate + H(+)</text>
        <dbReference type="Rhea" id="RHEA:40815"/>
        <dbReference type="ChEBI" id="CHEBI:15377"/>
        <dbReference type="ChEBI" id="CHEBI:15378"/>
        <dbReference type="ChEBI" id="CHEBI:30245"/>
        <dbReference type="ChEBI" id="CHEBI:73004"/>
        <dbReference type="ChEBI" id="CHEBI:73008"/>
    </reaction>
    <physiologicalReaction direction="left-to-right" evidence="15">
        <dbReference type="Rhea" id="RHEA:40816"/>
    </physiologicalReaction>
</comment>
<comment type="catalytic activity">
    <molecule>Isoform 3</molecule>
    <reaction evidence="7">
        <text>1-hexadecanoyl-2-(5Z,8Z,11Z,14Z-eicosatetraenoyl)-sn-glycero-3-phosphoethanolamine + H2O = 1-hexadecanoyl-sn-glycero-3-phosphoethanolamine + (5Z,8Z,11Z,14Z)-eicosatetraenoate + H(+)</text>
        <dbReference type="Rhea" id="RHEA:40431"/>
        <dbReference type="ChEBI" id="CHEBI:15377"/>
        <dbReference type="ChEBI" id="CHEBI:15378"/>
        <dbReference type="ChEBI" id="CHEBI:32395"/>
        <dbReference type="ChEBI" id="CHEBI:73004"/>
        <dbReference type="ChEBI" id="CHEBI:73009"/>
    </reaction>
    <physiologicalReaction direction="left-to-right" evidence="15">
        <dbReference type="Rhea" id="RHEA:40432"/>
    </physiologicalReaction>
</comment>
<comment type="catalytic activity">
    <molecule>Isoform 3</molecule>
    <reaction evidence="7">
        <text>1-hexadecanoyl-sn-glycero-3-phosphocholine + H2O = sn-glycerol 3-phosphocholine + hexadecanoate + H(+)</text>
        <dbReference type="Rhea" id="RHEA:40435"/>
        <dbReference type="ChEBI" id="CHEBI:7896"/>
        <dbReference type="ChEBI" id="CHEBI:15377"/>
        <dbReference type="ChEBI" id="CHEBI:15378"/>
        <dbReference type="ChEBI" id="CHEBI:16870"/>
        <dbReference type="ChEBI" id="CHEBI:72998"/>
    </reaction>
    <physiologicalReaction direction="left-to-right" evidence="15">
        <dbReference type="Rhea" id="RHEA:40436"/>
    </physiologicalReaction>
</comment>
<comment type="catalytic activity">
    <molecule>Isoform 5</molecule>
    <reaction evidence="4 5">
        <text>1-hexadecanoyl-2-(5Z,8Z,11Z,14Z-eicosatetraenoyl)-sn-glycero-3-phosphocholine + H2O = 1-hexadecanoyl-sn-glycero-3-phosphocholine + (5Z,8Z,11Z,14Z)-eicosatetraenoate + H(+)</text>
        <dbReference type="Rhea" id="RHEA:40427"/>
        <dbReference type="ChEBI" id="CHEBI:15377"/>
        <dbReference type="ChEBI" id="CHEBI:15378"/>
        <dbReference type="ChEBI" id="CHEBI:32395"/>
        <dbReference type="ChEBI" id="CHEBI:72998"/>
        <dbReference type="ChEBI" id="CHEBI:73003"/>
    </reaction>
    <physiologicalReaction direction="left-to-right" evidence="13 14">
        <dbReference type="Rhea" id="RHEA:40428"/>
    </physiologicalReaction>
</comment>
<comment type="catalytic activity">
    <molecule>Isoform 5</molecule>
    <reaction evidence="5 7">
        <text>1-hexadecanoyl-sn-glycero-3-phosphocholine + H2O = sn-glycerol 3-phosphocholine + hexadecanoate + H(+)</text>
        <dbReference type="Rhea" id="RHEA:40435"/>
        <dbReference type="ChEBI" id="CHEBI:7896"/>
        <dbReference type="ChEBI" id="CHEBI:15377"/>
        <dbReference type="ChEBI" id="CHEBI:15378"/>
        <dbReference type="ChEBI" id="CHEBI:16870"/>
        <dbReference type="ChEBI" id="CHEBI:72998"/>
    </reaction>
    <physiologicalReaction direction="left-to-right" evidence="14 15">
        <dbReference type="Rhea" id="RHEA:40436"/>
    </physiologicalReaction>
</comment>
<comment type="catalytic activity">
    <molecule>Isoform 5</molecule>
    <reaction evidence="5">
        <text>1-hexadecanoyl-2-(5Z,8Z,11Z,14Z-eicosatetraenoyl)-sn-glycero-3-phosphocholine + H2O = 2-(5Z,8Z,11Z,14Z)-eicosatetraenoyl-sn-glycero-3-phosphocholine + hexadecanoate + H(+)</text>
        <dbReference type="Rhea" id="RHEA:40571"/>
        <dbReference type="ChEBI" id="CHEBI:7896"/>
        <dbReference type="ChEBI" id="CHEBI:15377"/>
        <dbReference type="ChEBI" id="CHEBI:15378"/>
        <dbReference type="ChEBI" id="CHEBI:73003"/>
        <dbReference type="ChEBI" id="CHEBI:76079"/>
    </reaction>
    <physiologicalReaction direction="left-to-right" evidence="14">
        <dbReference type="Rhea" id="RHEA:40572"/>
    </physiologicalReaction>
</comment>
<comment type="catalytic activity">
    <molecule>Isoform 5</molecule>
    <reaction evidence="5 7">
        <text>1-hexadecanoyl-2-(5Z,8Z,11Z,14Z-eicosatetraenoyl)-sn-glycero-3-phosphoethanolamine + H2O = 1-hexadecanoyl-sn-glycero-3-phosphoethanolamine + (5Z,8Z,11Z,14Z)-eicosatetraenoate + H(+)</text>
        <dbReference type="Rhea" id="RHEA:40431"/>
        <dbReference type="ChEBI" id="CHEBI:15377"/>
        <dbReference type="ChEBI" id="CHEBI:15378"/>
        <dbReference type="ChEBI" id="CHEBI:32395"/>
        <dbReference type="ChEBI" id="CHEBI:73004"/>
        <dbReference type="ChEBI" id="CHEBI:73009"/>
    </reaction>
    <physiologicalReaction direction="left-to-right" evidence="14 15">
        <dbReference type="Rhea" id="RHEA:40432"/>
    </physiologicalReaction>
</comment>
<comment type="cofactor">
    <cofactor evidence="2">
        <name>Ca(2+)</name>
        <dbReference type="ChEBI" id="CHEBI:29108"/>
    </cofactor>
</comment>
<comment type="activity regulation">
    <molecule>Isoform 5</molecule>
    <text evidence="4 5">Stimulated by cytosolic Ca(2+).</text>
</comment>
<comment type="biophysicochemical properties">
    <molecule>Isoform 3</molecule>
    <kinetics>
        <text evidence="7">The specific activity is 0.8 nmol/min/ug enzyme with 1-hexadecanoyl-2-(5Z,8Z,11Z,14Z-eicosatetraenoyl)-sn-glycero-3-phosphoethanolamine as substrate. The specific activity is 0.3 nmol/min/ug enzyme with 1-hexadecanoyl-2-(9Z,12Z-octadecadienoyl)-sn-glycero-3-phosphoethanolamine as substrate. The specific activity is 1.6 nmol/min/ug enzyme with 1-hexadecanoyl-sn-glycero-3-phosphocholine as substrate.</text>
    </kinetics>
</comment>
<comment type="biophysicochemical properties">
    <molecule>Isoform 5</molecule>
    <kinetics>
        <text evidence="7">The specific activity is 2.1 nmol/min/ug enzyme with 1-hexadecanoyl-2-(5Z,8Z,11Z,14Z-eicosatetraenoyl)-sn-glycero-3-phosphocholine as substrate. The specific activity is 0.6 nmol/min/ug enzyme with 1-hexadecanoyl-2-(5Z,8Z,11Z,14Z-eicosatetraenoyl)-sn-glycero-3-phosphoethanolamine as substrate. The specific activity is 140 nmol/min/ug enzyme with 1-hexadecanoyl-sn-glycero-3-phosphocholine as substrate.</text>
    </kinetics>
</comment>
<comment type="subcellular location">
    <molecule>Isoform 3</molecule>
    <subcellularLocation>
        <location evidence="7">Cytoplasm</location>
        <location evidence="7">Cytosol</location>
    </subcellularLocation>
    <subcellularLocation>
        <location evidence="7">Mitochondrion membrane</location>
        <topology>Peripheral membrane protein</topology>
    </subcellularLocation>
    <subcellularLocation>
        <location evidence="7">Early endosome membrane</location>
        <topology>Peripheral membrane protein</topology>
    </subcellularLocation>
    <text evidence="7">Translocates to membrane vesicles in a calcium-dependent fashion.</text>
</comment>
<comment type="subcellular location">
    <molecule>Isoform 5</molecule>
    <subcellularLocation>
        <location evidence="7">Cytoplasm</location>
        <location evidence="7">Cytosol</location>
    </subcellularLocation>
</comment>
<comment type="alternative products">
    <event type="alternative splicing"/>
    <isoform>
        <id>P0C869-1</id>
        <id>O95712-1</id>
        <name>1</name>
        <sequence type="displayed"/>
    </isoform>
    <isoform>
        <id>P0C869-7</id>
        <name>2</name>
        <name>beta2</name>
        <sequence type="described" ref="VSP_039387 VSP_039389 VSP_039390"/>
    </isoform>
    <isoform>
        <id>P0C869-8</id>
        <name>3</name>
        <name>beta3</name>
        <sequence type="described" ref="VSP_039387 VSP_039388"/>
    </isoform>
    <isoform>
        <id>P0C869-4</id>
        <id>O95712-4</id>
        <name>4</name>
        <sequence type="described" ref="VSP_019871"/>
    </isoform>
    <isoform>
        <id>P0C869-6</id>
        <name>5</name>
        <name>Beta1</name>
        <sequence type="described" ref="VSP_039387"/>
    </isoform>
</comment>
<comment type="tissue specificity">
    <text evidence="4 5 7">Widely expressed. Expressed at higher level in brain, heart, liver, cerebellum and pancreas.</text>
</comment>
<comment type="domain">
    <text evidence="1">The N-terminal C2 domain associates with lipid membranes upon calcium binding. It modulates enzyme activity by presenting the active site to its substrate in response to elevations of cytosolic Ca(2+) (By similarity).</text>
</comment>
<comment type="miscellaneous">
    <molecule>Isoform 2</molecule>
    <text evidence="12">Based on a naturally occurring readthrough transcript which produces a JMJD7-PLA2G4B fusion protein.</text>
</comment>
<comment type="miscellaneous">
    <molecule>Isoform 3</molecule>
    <text evidence="12">Based on a naturally occurring readthrough transcript which produces a JMJD7-PLA2G4B fusion protein.</text>
</comment>
<comment type="miscellaneous">
    <molecule>Isoform 5</molecule>
    <text evidence="12">Based on a naturally occurring readthrough transcript which produces a JMJD7-PLA2G4B fusion protein.</text>
</comment>
<comment type="caution">
    <text evidence="12">Most tissues also express read-through transcripts from this gene into the upstream gene (JMJD7), some of which may encode fusion proteins.</text>
</comment>
<comment type="sequence caution" evidence="12">
    <conflict type="erroneous initiation">
        <sequence resource="EMBL-CDS" id="BAD92387"/>
    </conflict>
    <text>Extended N-terminus.</text>
</comment>
<feature type="chain" id="PRO_0000247021" description="Cytosolic phospholipase A2 beta">
    <location>
        <begin position="1"/>
        <end position="781"/>
    </location>
</feature>
<feature type="domain" description="C2" evidence="2">
    <location>
        <begin position="1"/>
        <end position="112"/>
    </location>
</feature>
<feature type="domain" description="PLA2c" evidence="3">
    <location>
        <begin position="246"/>
        <end position="781"/>
    </location>
</feature>
<feature type="active site" description="Nucleophile" evidence="1">
    <location>
        <position position="335"/>
    </location>
</feature>
<feature type="active site" description="Proton acceptor" evidence="1">
    <location>
        <position position="615"/>
    </location>
</feature>
<feature type="binding site" evidence="2">
    <location>
        <position position="26"/>
    </location>
    <ligand>
        <name>Ca(2+)</name>
        <dbReference type="ChEBI" id="CHEBI:29108"/>
        <label>1</label>
    </ligand>
</feature>
<feature type="binding site" evidence="2">
    <location>
        <position position="26"/>
    </location>
    <ligand>
        <name>Ca(2+)</name>
        <dbReference type="ChEBI" id="CHEBI:29108"/>
        <label>2</label>
    </ligand>
</feature>
<feature type="binding site" evidence="2">
    <location>
        <position position="32"/>
    </location>
    <ligand>
        <name>Ca(2+)</name>
        <dbReference type="ChEBI" id="CHEBI:29108"/>
        <label>1</label>
    </ligand>
</feature>
<feature type="binding site" evidence="2">
    <location>
        <position position="82"/>
    </location>
    <ligand>
        <name>Ca(2+)</name>
        <dbReference type="ChEBI" id="CHEBI:29108"/>
        <label>1</label>
    </ligand>
</feature>
<feature type="binding site" evidence="2">
    <location>
        <position position="82"/>
    </location>
    <ligand>
        <name>Ca(2+)</name>
        <dbReference type="ChEBI" id="CHEBI:29108"/>
        <label>2</label>
    </ligand>
</feature>
<feature type="binding site" evidence="2">
    <location>
        <position position="84"/>
    </location>
    <ligand>
        <name>Ca(2+)</name>
        <dbReference type="ChEBI" id="CHEBI:29108"/>
        <label>1</label>
    </ligand>
</feature>
<feature type="binding site" evidence="2">
    <location>
        <position position="84"/>
    </location>
    <ligand>
        <name>Ca(2+)</name>
        <dbReference type="ChEBI" id="CHEBI:29108"/>
        <label>2</label>
    </ligand>
</feature>
<feature type="binding site" evidence="2">
    <location>
        <position position="90"/>
    </location>
    <ligand>
        <name>Ca(2+)</name>
        <dbReference type="ChEBI" id="CHEBI:29108"/>
        <label>2</label>
    </ligand>
</feature>
<feature type="splice variant" id="VSP_019871" description="In isoform 4." evidence="11">
    <location>
        <begin position="1"/>
        <end position="299"/>
    </location>
</feature>
<feature type="splice variant" id="VSP_039387" description="In isoform 2, isoform 3 and isoform 5." evidence="8 9 10">
    <original>MAV</original>
    <variation>MAEAALEAVRSELREFPAAARELCVPLAVPYLDKPPTPLHFYRDWVCPNRPCIIRNALQHWPALQKWSLPYFRATVGSTEVSVAVTPDGYADAVRGDRFMMPAERRLPLSFVLDVLEGRAQHPGVLYVQKQCSNLPSELPQLLPDLESHVPWASEALGKMPDAVNFWLGEAAAVTSLHKDHYENLYCVVSGEKHFLFHPPSDRPFIPYELYTPATYQLTEEGTFKVVDEEAMEK</variation>
    <location>
        <begin position="1"/>
        <end position="3"/>
    </location>
</feature>
<feature type="splice variant" id="VSP_039388" description="In isoform 3." evidence="10">
    <location>
        <begin position="641"/>
        <end position="765"/>
    </location>
</feature>
<feature type="splice variant" id="VSP_039389" description="In isoform 2." evidence="10">
    <original>QLQLLGRFCQEQG</original>
    <variation>GSGGHPRRRQLGR</variation>
    <location>
        <begin position="650"/>
        <end position="662"/>
    </location>
</feature>
<feature type="splice variant" id="VSP_039390" description="In isoform 2." evidence="10">
    <location>
        <begin position="663"/>
        <end position="781"/>
    </location>
</feature>
<feature type="sequence variant" id="VAR_027047" description="In dbSNP:rs3816533." evidence="6">
    <original>R</original>
    <variation>C</variation>
    <location>
        <position position="191"/>
    </location>
</feature>
<feature type="sequence variant" id="VAR_027048" description="In dbSNP:rs2290552.">
    <original>M</original>
    <variation>I</variation>
    <location>
        <position position="239"/>
    </location>
</feature>
<feature type="sequence variant" id="VAR_034365" description="In dbSNP:rs34807597.">
    <original>R</original>
    <variation>H</variation>
    <location>
        <position position="391"/>
    </location>
</feature>
<feature type="sequence variant" id="VAR_060082" description="In dbSNP:rs36126315.">
    <original>T</original>
    <variation>I</variation>
    <location>
        <position position="591"/>
    </location>
</feature>
<feature type="mutagenesis site" description="Abolishes enzyme activity." evidence="4">
    <original>S</original>
    <variation>A</variation>
    <location>
        <position position="335"/>
    </location>
</feature>
<feature type="mutagenesis site" description="No effect." evidence="4">
    <original>H</original>
    <variation>A</variation>
    <location>
        <position position="417"/>
    </location>
</feature>
<feature type="mutagenesis site" description="Abolishes enzyme activity." evidence="4">
    <original>D</original>
    <variation>A</variation>
    <location>
        <position position="615"/>
    </location>
</feature>
<feature type="mutagenesis site" description="Abolishes enzyme activity." evidence="4">
    <original>R</original>
    <variation>A</variation>
    <location>
        <position position="632"/>
    </location>
</feature>
<feature type="sequence conflict" description="In Ref. 2; AAD32135." evidence="12" ref="2">
    <original>L</original>
    <variation>F</variation>
    <location>
        <position position="138"/>
    </location>
</feature>
<feature type="sequence conflict" description="In Ref. 3; ABF69195/ABF69196." evidence="12" ref="3">
    <original>Q</original>
    <variation>P</variation>
    <location>
        <position position="162"/>
    </location>
</feature>
<feature type="sequence conflict" description="In Ref. 3; ABF69195." evidence="12" ref="3">
    <original>A</original>
    <variation>V</variation>
    <location>
        <position position="438"/>
    </location>
</feature>
<feature type="sequence conflict" description="In Ref. 3; ABF69195." evidence="12" ref="3">
    <original>S</original>
    <variation>P</variation>
    <location>
        <position position="517"/>
    </location>
</feature>
<feature type="sequence conflict" description="In Ref. 4; BAG61401." evidence="12" ref="4">
    <original>R</original>
    <variation>C</variation>
    <location>
        <position position="575"/>
    </location>
</feature>
<feature type="sequence conflict" description="In Ref. 4; BAG61401." evidence="12" ref="4">
    <original>G</original>
    <variation>E</variation>
    <location>
        <position position="723"/>
    </location>
</feature>
<protein>
    <recommendedName>
        <fullName evidence="10">Cytosolic phospholipase A2 beta</fullName>
        <shortName evidence="10">cPLA2-beta</shortName>
        <ecNumber evidence="4 5 7">3.1.1.4</ecNumber>
    </recommendedName>
    <alternativeName>
        <fullName evidence="15">Lysophospholipase A1 group IVB</fullName>
        <ecNumber evidence="5 7">3.1.1.5</ecNumber>
    </alternativeName>
    <alternativeName>
        <fullName>Phospholipase A2 group IVB</fullName>
    </alternativeName>
</protein>
<accession>P0C869</accession>
<accession>B4DRT9</accession>
<accession>O95712</accession>
<accession>Q19KD5</accession>
<accession>Q19KD6</accession>
<accession>Q59GF9</accession>
<accession>Q8TB10</accession>
<accession>Q9UKV7</accession>
<organism>
    <name type="scientific">Homo sapiens</name>
    <name type="common">Human</name>
    <dbReference type="NCBI Taxonomy" id="9606"/>
    <lineage>
        <taxon>Eukaryota</taxon>
        <taxon>Metazoa</taxon>
        <taxon>Chordata</taxon>
        <taxon>Craniata</taxon>
        <taxon>Vertebrata</taxon>
        <taxon>Euteleostomi</taxon>
        <taxon>Mammalia</taxon>
        <taxon>Eutheria</taxon>
        <taxon>Euarchontoglires</taxon>
        <taxon>Primates</taxon>
        <taxon>Haplorrhini</taxon>
        <taxon>Catarrhini</taxon>
        <taxon>Hominidae</taxon>
        <taxon>Homo</taxon>
    </lineage>
</organism>
<reference key="1">
    <citation type="journal article" date="1999" name="J. Biol. Chem.">
        <title>Molecular cloning of two new human paralogs of 85-kDa cytosolic phospholipase A2.</title>
        <authorList>
            <person name="Pickard R.T."/>
            <person name="Strifler B.A."/>
            <person name="Kramer R.M."/>
            <person name="Sharp J.D."/>
        </authorList>
    </citation>
    <scope>NUCLEOTIDE SEQUENCE [MRNA] (ISOFORM 5)</scope>
    <scope>FUNCTION (ISOFORM 5)</scope>
    <scope>CATALYTIC ACTIVITY (ISOFORM 5)</scope>
    <scope>ACTIVITY REGULATION (ISOFORM 5)</scope>
    <scope>TISSUE SPECIFICITY</scope>
    <scope>MUTAGENESIS OF SER-335; HIS-417; ASP-615 AND ARG-632</scope>
</reference>
<reference key="2">
    <citation type="journal article" date="1999" name="J. Biol. Chem.">
        <title>Molecular characterization of cytosolic phospholipase A2-beta.</title>
        <authorList>
            <person name="Song C."/>
            <person name="Chang X.J."/>
            <person name="Bean K.M."/>
            <person name="Proia M.S."/>
            <person name="Knopf J.L."/>
            <person name="Kriz R.W."/>
        </authorList>
    </citation>
    <scope>NUCLEOTIDE SEQUENCE [MRNA] (ISOFORM 5)</scope>
    <scope>FUNCTION (ISOFORM 5)</scope>
    <scope>CATALYTIC ACTIVITY (ISOFORM 5)</scope>
    <scope>ACTIVITY REGULATION (ISOFORM 5)</scope>
    <scope>TISSUE SPECIFICITY</scope>
</reference>
<reference key="3">
    <citation type="journal article" date="2006" name="J. Biol. Chem.">
        <title>Identification of the expressed form of human cytosolic phospholipase A2beta (cPLA2beta): cPLA2beta3 is a novel variant localized to mitochondria and early endosomes.</title>
        <authorList>
            <person name="Ghosh M."/>
            <person name="Loper R."/>
            <person name="Gelb M.H."/>
            <person name="Leslie C.C."/>
        </authorList>
    </citation>
    <scope>NUCLEOTIDE SEQUENCE [MRNA] (ISOFORMS 2 AND 3)</scope>
    <scope>FUNCTION (ISOFORMS 3 AND 5)</scope>
    <scope>CATALYTIC ACTIVITY (ISOFORMS 3 AND 5)</scope>
    <scope>BIOPHYSICOCHEMICAL PROPERTIES (ISOFORMS 3 AND 5)</scope>
    <scope>SUBCELLULAR LOCATION (ISOFORMS 3 AND 5)</scope>
    <scope>TISSUE SPECIFICITY</scope>
</reference>
<reference key="4">
    <citation type="journal article" date="2004" name="Nat. Genet.">
        <title>Complete sequencing and characterization of 21,243 full-length human cDNAs.</title>
        <authorList>
            <person name="Ota T."/>
            <person name="Suzuki Y."/>
            <person name="Nishikawa T."/>
            <person name="Otsuki T."/>
            <person name="Sugiyama T."/>
            <person name="Irie R."/>
            <person name="Wakamatsu A."/>
            <person name="Hayashi K."/>
            <person name="Sato H."/>
            <person name="Nagai K."/>
            <person name="Kimura K."/>
            <person name="Makita H."/>
            <person name="Sekine M."/>
            <person name="Obayashi M."/>
            <person name="Nishi T."/>
            <person name="Shibahara T."/>
            <person name="Tanaka T."/>
            <person name="Ishii S."/>
            <person name="Yamamoto J."/>
            <person name="Saito K."/>
            <person name="Kawai Y."/>
            <person name="Isono Y."/>
            <person name="Nakamura Y."/>
            <person name="Nagahari K."/>
            <person name="Murakami K."/>
            <person name="Yasuda T."/>
            <person name="Iwayanagi T."/>
            <person name="Wagatsuma M."/>
            <person name="Shiratori A."/>
            <person name="Sudo H."/>
            <person name="Hosoiri T."/>
            <person name="Kaku Y."/>
            <person name="Kodaira H."/>
            <person name="Kondo H."/>
            <person name="Sugawara M."/>
            <person name="Takahashi M."/>
            <person name="Kanda K."/>
            <person name="Yokoi T."/>
            <person name="Furuya T."/>
            <person name="Kikkawa E."/>
            <person name="Omura Y."/>
            <person name="Abe K."/>
            <person name="Kamihara K."/>
            <person name="Katsuta N."/>
            <person name="Sato K."/>
            <person name="Tanikawa M."/>
            <person name="Yamazaki M."/>
            <person name="Ninomiya K."/>
            <person name="Ishibashi T."/>
            <person name="Yamashita H."/>
            <person name="Murakawa K."/>
            <person name="Fujimori K."/>
            <person name="Tanai H."/>
            <person name="Kimata M."/>
            <person name="Watanabe M."/>
            <person name="Hiraoka S."/>
            <person name="Chiba Y."/>
            <person name="Ishida S."/>
            <person name="Ono Y."/>
            <person name="Takiguchi S."/>
            <person name="Watanabe S."/>
            <person name="Yosida M."/>
            <person name="Hotuta T."/>
            <person name="Kusano J."/>
            <person name="Kanehori K."/>
            <person name="Takahashi-Fujii A."/>
            <person name="Hara H."/>
            <person name="Tanase T.-O."/>
            <person name="Nomura Y."/>
            <person name="Togiya S."/>
            <person name="Komai F."/>
            <person name="Hara R."/>
            <person name="Takeuchi K."/>
            <person name="Arita M."/>
            <person name="Imose N."/>
            <person name="Musashino K."/>
            <person name="Yuuki H."/>
            <person name="Oshima A."/>
            <person name="Sasaki N."/>
            <person name="Aotsuka S."/>
            <person name="Yoshikawa Y."/>
            <person name="Matsunawa H."/>
            <person name="Ichihara T."/>
            <person name="Shiohata N."/>
            <person name="Sano S."/>
            <person name="Moriya S."/>
            <person name="Momiyama H."/>
            <person name="Satoh N."/>
            <person name="Takami S."/>
            <person name="Terashima Y."/>
            <person name="Suzuki O."/>
            <person name="Nakagawa S."/>
            <person name="Senoh A."/>
            <person name="Mizoguchi H."/>
            <person name="Goto Y."/>
            <person name="Shimizu F."/>
            <person name="Wakebe H."/>
            <person name="Hishigaki H."/>
            <person name="Watanabe T."/>
            <person name="Sugiyama A."/>
            <person name="Takemoto M."/>
            <person name="Kawakami B."/>
            <person name="Yamazaki M."/>
            <person name="Watanabe K."/>
            <person name="Kumagai A."/>
            <person name="Itakura S."/>
            <person name="Fukuzumi Y."/>
            <person name="Fujimori Y."/>
            <person name="Komiyama M."/>
            <person name="Tashiro H."/>
            <person name="Tanigami A."/>
            <person name="Fujiwara T."/>
            <person name="Ono T."/>
            <person name="Yamada K."/>
            <person name="Fujii Y."/>
            <person name="Ozaki K."/>
            <person name="Hirao M."/>
            <person name="Ohmori Y."/>
            <person name="Kawabata A."/>
            <person name="Hikiji T."/>
            <person name="Kobatake N."/>
            <person name="Inagaki H."/>
            <person name="Ikema Y."/>
            <person name="Okamoto S."/>
            <person name="Okitani R."/>
            <person name="Kawakami T."/>
            <person name="Noguchi S."/>
            <person name="Itoh T."/>
            <person name="Shigeta K."/>
            <person name="Senba T."/>
            <person name="Matsumura K."/>
            <person name="Nakajima Y."/>
            <person name="Mizuno T."/>
            <person name="Morinaga M."/>
            <person name="Sasaki M."/>
            <person name="Togashi T."/>
            <person name="Oyama M."/>
            <person name="Hata H."/>
            <person name="Watanabe M."/>
            <person name="Komatsu T."/>
            <person name="Mizushima-Sugano J."/>
            <person name="Satoh T."/>
            <person name="Shirai Y."/>
            <person name="Takahashi Y."/>
            <person name="Nakagawa K."/>
            <person name="Okumura K."/>
            <person name="Nagase T."/>
            <person name="Nomura N."/>
            <person name="Kikuchi H."/>
            <person name="Masuho Y."/>
            <person name="Yamashita R."/>
            <person name="Nakai K."/>
            <person name="Yada T."/>
            <person name="Nakamura Y."/>
            <person name="Ohara O."/>
            <person name="Isogai T."/>
            <person name="Sugano S."/>
        </authorList>
    </citation>
    <scope>NUCLEOTIDE SEQUENCE [LARGE SCALE MRNA] (ISOFORM 1)</scope>
    <scope>VARIANT CYS-191</scope>
    <source>
        <tissue>Tongue</tissue>
    </source>
</reference>
<reference key="5">
    <citation type="submission" date="2005-03" db="EMBL/GenBank/DDBJ databases">
        <authorList>
            <person name="Totoki Y."/>
            <person name="Toyoda A."/>
            <person name="Takeda T."/>
            <person name="Sakaki Y."/>
            <person name="Tanaka A."/>
            <person name="Yokoyama S."/>
            <person name="Ohara O."/>
            <person name="Nagase T."/>
            <person name="Kikuno R.F."/>
        </authorList>
    </citation>
    <scope>NUCLEOTIDE SEQUENCE [LARGE SCALE MRNA] (ISOFORM 4)</scope>
    <source>
        <tissue>Brain</tissue>
    </source>
</reference>
<reference key="6">
    <citation type="journal article" date="2006" name="Nature">
        <title>Analysis of the DNA sequence and duplication history of human chromosome 15.</title>
        <authorList>
            <person name="Zody M.C."/>
            <person name="Garber M."/>
            <person name="Sharpe T."/>
            <person name="Young S.K."/>
            <person name="Rowen L."/>
            <person name="O'Neill K."/>
            <person name="Whittaker C.A."/>
            <person name="Kamal M."/>
            <person name="Chang J.L."/>
            <person name="Cuomo C.A."/>
            <person name="Dewar K."/>
            <person name="FitzGerald M.G."/>
            <person name="Kodira C.D."/>
            <person name="Madan A."/>
            <person name="Qin S."/>
            <person name="Yang X."/>
            <person name="Abbasi N."/>
            <person name="Abouelleil A."/>
            <person name="Arachchi H.M."/>
            <person name="Baradarani L."/>
            <person name="Birditt B."/>
            <person name="Bloom S."/>
            <person name="Bloom T."/>
            <person name="Borowsky M.L."/>
            <person name="Burke J."/>
            <person name="Butler J."/>
            <person name="Cook A."/>
            <person name="DeArellano K."/>
            <person name="DeCaprio D."/>
            <person name="Dorris L. III"/>
            <person name="Dors M."/>
            <person name="Eichler E.E."/>
            <person name="Engels R."/>
            <person name="Fahey J."/>
            <person name="Fleetwood P."/>
            <person name="Friedman C."/>
            <person name="Gearin G."/>
            <person name="Hall J.L."/>
            <person name="Hensley G."/>
            <person name="Johnson E."/>
            <person name="Jones C."/>
            <person name="Kamat A."/>
            <person name="Kaur A."/>
            <person name="Locke D.P."/>
            <person name="Madan A."/>
            <person name="Munson G."/>
            <person name="Jaffe D.B."/>
            <person name="Lui A."/>
            <person name="Macdonald P."/>
            <person name="Mauceli E."/>
            <person name="Naylor J.W."/>
            <person name="Nesbitt R."/>
            <person name="Nicol R."/>
            <person name="O'Leary S.B."/>
            <person name="Ratcliffe A."/>
            <person name="Rounsley S."/>
            <person name="She X."/>
            <person name="Sneddon K.M.B."/>
            <person name="Stewart S."/>
            <person name="Sougnez C."/>
            <person name="Stone S.M."/>
            <person name="Topham K."/>
            <person name="Vincent D."/>
            <person name="Wang S."/>
            <person name="Zimmer A.R."/>
            <person name="Birren B.W."/>
            <person name="Hood L."/>
            <person name="Lander E.S."/>
            <person name="Nusbaum C."/>
        </authorList>
    </citation>
    <scope>NUCLEOTIDE SEQUENCE [LARGE SCALE GENOMIC DNA]</scope>
</reference>
<proteinExistence type="evidence at protein level"/>
<dbReference type="EC" id="3.1.1.4" evidence="4 5 7"/>
<dbReference type="EC" id="3.1.1.5" evidence="5 7"/>
<dbReference type="EMBL" id="AF065215">
    <property type="protein sequence ID" value="AAC78836.1"/>
    <property type="molecule type" value="mRNA"/>
</dbReference>
<dbReference type="EMBL" id="AF121908">
    <property type="protein sequence ID" value="AAD32135.1"/>
    <property type="molecule type" value="mRNA"/>
</dbReference>
<dbReference type="EMBL" id="DQ523799">
    <property type="protein sequence ID" value="ABF69195.1"/>
    <property type="molecule type" value="mRNA"/>
</dbReference>
<dbReference type="EMBL" id="DQ523800">
    <property type="protein sequence ID" value="ABF69196.1"/>
    <property type="molecule type" value="mRNA"/>
</dbReference>
<dbReference type="EMBL" id="AK299419">
    <property type="protein sequence ID" value="BAG61401.1"/>
    <property type="molecule type" value="mRNA"/>
</dbReference>
<dbReference type="EMBL" id="AB209150">
    <property type="protein sequence ID" value="BAD92387.1"/>
    <property type="status" value="ALT_INIT"/>
    <property type="molecule type" value="mRNA"/>
</dbReference>
<dbReference type="EMBL" id="AC020659">
    <property type="status" value="NOT_ANNOTATED_CDS"/>
    <property type="molecule type" value="Genomic_DNA"/>
</dbReference>
<dbReference type="CCDS" id="CCDS45241.1"/>
<dbReference type="RefSeq" id="NP_001108105.1">
    <molecule id="P0C869-1"/>
    <property type="nucleotide sequence ID" value="NM_001114633.2"/>
</dbReference>
<dbReference type="RefSeq" id="NP_001185517.1">
    <molecule id="P0C869-7"/>
    <property type="nucleotide sequence ID" value="NM_001198588.1"/>
</dbReference>
<dbReference type="RefSeq" id="NP_005081.1">
    <molecule id="P0C869-6"/>
    <property type="nucleotide sequence ID" value="NM_005090.3"/>
</dbReference>
<dbReference type="SMR" id="P0C869"/>
<dbReference type="BioGRID" id="114229">
    <property type="interactions" value="34"/>
</dbReference>
<dbReference type="BioGRID" id="936685">
    <property type="interactions" value="10"/>
</dbReference>
<dbReference type="FunCoup" id="P0C869">
    <property type="interactions" value="915"/>
</dbReference>
<dbReference type="IntAct" id="P0C869">
    <property type="interactions" value="16"/>
</dbReference>
<dbReference type="STRING" id="9606.ENSP00000396045"/>
<dbReference type="BindingDB" id="P0C869"/>
<dbReference type="ChEMBL" id="CHEMBL4136"/>
<dbReference type="SwissLipids" id="SLP:000000616">
    <molecule id="P0C869-8"/>
</dbReference>
<dbReference type="SwissLipids" id="SLP:000000617">
    <molecule id="P0C869-6"/>
</dbReference>
<dbReference type="iPTMnet" id="P0C869"/>
<dbReference type="PhosphoSitePlus" id="P0C869"/>
<dbReference type="BioMuta" id="PLA2G4B"/>
<dbReference type="DMDM" id="300669659"/>
<dbReference type="jPOST" id="P0C869"/>
<dbReference type="MassIVE" id="P0C869"/>
<dbReference type="PaxDb" id="9606-ENSP00000396045"/>
<dbReference type="PeptideAtlas" id="P0C869"/>
<dbReference type="ProteomicsDB" id="52403"/>
<dbReference type="ProteomicsDB" id="52404">
    <molecule id="P0C869-4"/>
</dbReference>
<dbReference type="ProteomicsDB" id="52405">
    <molecule id="P0C869-6"/>
</dbReference>
<dbReference type="ProteomicsDB" id="52406">
    <molecule id="P0C869-7"/>
</dbReference>
<dbReference type="ProteomicsDB" id="52407">
    <molecule id="P0C869-8"/>
</dbReference>
<dbReference type="Antibodypedia" id="70595">
    <property type="antibodies" value="78 antibodies from 18 providers"/>
</dbReference>
<dbReference type="DNASU" id="8681"/>
<dbReference type="Ensembl" id="ENST00000452633.5">
    <molecule id="P0C869-1"/>
    <property type="protein sequence ID" value="ENSP00000396045.1"/>
    <property type="gene ID" value="ENSG00000243708.11"/>
</dbReference>
<dbReference type="Ensembl" id="ENST00000458483.4">
    <molecule id="P0C869-1"/>
    <property type="protein sequence ID" value="ENSP00000416610.1"/>
    <property type="gene ID" value="ENSG00000243708.11"/>
</dbReference>
<dbReference type="GeneID" id="100137049"/>
<dbReference type="KEGG" id="hsa:100137049"/>
<dbReference type="KEGG" id="hsa:8681"/>
<dbReference type="MANE-Select" id="ENST00000458483.4">
    <property type="protein sequence ID" value="ENSP00000416610.1"/>
    <property type="RefSeq nucleotide sequence ID" value="NM_001114633.2"/>
    <property type="RefSeq protein sequence ID" value="NP_001108105.1"/>
</dbReference>
<dbReference type="UCSC" id="uc010bco.4">
    <property type="organism name" value="human"/>
</dbReference>
<dbReference type="AGR" id="HGNC:34449"/>
<dbReference type="AGR" id="HGNC:9036"/>
<dbReference type="CTD" id="100137049"/>
<dbReference type="CTD" id="8681"/>
<dbReference type="DisGeNET" id="100137049"/>
<dbReference type="DisGeNET" id="8681"/>
<dbReference type="GeneCards" id="PLA2G4B"/>
<dbReference type="HGNC" id="HGNC:9036">
    <property type="gene designation" value="PLA2G4B"/>
</dbReference>
<dbReference type="HPA" id="ENSG00000243708">
    <property type="expression patterns" value="Low tissue specificity"/>
</dbReference>
<dbReference type="MIM" id="606088">
    <property type="type" value="gene"/>
</dbReference>
<dbReference type="neXtProt" id="NX_P0C869"/>
<dbReference type="OpenTargets" id="ENSG00000168970"/>
<dbReference type="OpenTargets" id="ENSG00000243708"/>
<dbReference type="PharmGKB" id="PA165479070"/>
<dbReference type="VEuPathDB" id="HostDB:ENSG00000243708"/>
<dbReference type="eggNOG" id="KOG1028">
    <property type="taxonomic scope" value="Eukaryota"/>
</dbReference>
<dbReference type="eggNOG" id="KOG1325">
    <property type="taxonomic scope" value="Eukaryota"/>
</dbReference>
<dbReference type="GeneTree" id="ENSGT01030000234606"/>
<dbReference type="HOGENOM" id="CLU_011663_0_0_1"/>
<dbReference type="InParanoid" id="P0C869"/>
<dbReference type="OMA" id="FRFRIHS"/>
<dbReference type="OrthoDB" id="419768at2759"/>
<dbReference type="PAN-GO" id="P0C869">
    <property type="GO annotations" value="5 GO annotations based on evolutionary models"/>
</dbReference>
<dbReference type="PhylomeDB" id="P0C869"/>
<dbReference type="TreeFam" id="TF325228"/>
<dbReference type="PathwayCommons" id="P0C869"/>
<dbReference type="Reactome" id="R-HSA-1482788">
    <property type="pathway name" value="Acyl chain remodelling of PC"/>
</dbReference>
<dbReference type="Reactome" id="R-HSA-1482801">
    <property type="pathway name" value="Acyl chain remodelling of PS"/>
</dbReference>
<dbReference type="Reactome" id="R-HSA-1482839">
    <property type="pathway name" value="Acyl chain remodelling of PE"/>
</dbReference>
<dbReference type="Reactome" id="R-HSA-1482925">
    <property type="pathway name" value="Acyl chain remodelling of PG"/>
</dbReference>
<dbReference type="Reactome" id="R-HSA-1483115">
    <property type="pathway name" value="Hydrolysis of LPC"/>
</dbReference>
<dbReference type="Reactome" id="R-HSA-1483166">
    <property type="pathway name" value="Synthesis of PA"/>
</dbReference>
<dbReference type="Reactome" id="R-HSA-381038">
    <property type="pathway name" value="XBP1(S) activates chaperone genes"/>
</dbReference>
<dbReference type="SignaLink" id="P0C869"/>
<dbReference type="BioGRID-ORCS" id="100137049">
    <property type="hits" value="31 hits in 1113 CRISPR screens"/>
</dbReference>
<dbReference type="BioGRID-ORCS" id="8681">
    <property type="hits" value="12 hits in 977 CRISPR screens"/>
</dbReference>
<dbReference type="GeneWiki" id="PLA2G4B"/>
<dbReference type="Pharos" id="P0C869">
    <property type="development level" value="Tchem"/>
</dbReference>
<dbReference type="PRO" id="PR:P0C869"/>
<dbReference type="Proteomes" id="UP000005640">
    <property type="component" value="Chromosome 15"/>
</dbReference>
<dbReference type="RNAct" id="P0C869">
    <property type="molecule type" value="protein"/>
</dbReference>
<dbReference type="Bgee" id="ENSG00000243708">
    <property type="expression patterns" value="Expressed in lower esophagus mucosa and 94 other cell types or tissues"/>
</dbReference>
<dbReference type="ExpressionAtlas" id="P0C869">
    <property type="expression patterns" value="baseline and differential"/>
</dbReference>
<dbReference type="GO" id="GO:0005829">
    <property type="term" value="C:cytosol"/>
    <property type="evidence" value="ECO:0000314"/>
    <property type="project" value="UniProtKB"/>
</dbReference>
<dbReference type="GO" id="GO:0031901">
    <property type="term" value="C:early endosome membrane"/>
    <property type="evidence" value="ECO:0000314"/>
    <property type="project" value="UniProtKB"/>
</dbReference>
<dbReference type="GO" id="GO:0005576">
    <property type="term" value="C:extracellular region"/>
    <property type="evidence" value="ECO:0000304"/>
    <property type="project" value="UniProtKB"/>
</dbReference>
<dbReference type="GO" id="GO:0005743">
    <property type="term" value="C:mitochondrial inner membrane"/>
    <property type="evidence" value="ECO:0000314"/>
    <property type="project" value="UniProtKB"/>
</dbReference>
<dbReference type="GO" id="GO:0005509">
    <property type="term" value="F:calcium ion binding"/>
    <property type="evidence" value="ECO:0000318"/>
    <property type="project" value="GO_Central"/>
</dbReference>
<dbReference type="GO" id="GO:0047498">
    <property type="term" value="F:calcium-dependent phospholipase A2 activity"/>
    <property type="evidence" value="ECO:0000314"/>
    <property type="project" value="UniProtKB"/>
</dbReference>
<dbReference type="GO" id="GO:0005544">
    <property type="term" value="F:calcium-dependent phospholipid binding"/>
    <property type="evidence" value="ECO:0000318"/>
    <property type="project" value="GO_Central"/>
</dbReference>
<dbReference type="GO" id="GO:0004622">
    <property type="term" value="F:lysophospholipase activity"/>
    <property type="evidence" value="ECO:0000314"/>
    <property type="project" value="UniProtKB"/>
</dbReference>
<dbReference type="GO" id="GO:0008970">
    <property type="term" value="F:phospholipase A1 activity"/>
    <property type="evidence" value="ECO:0000314"/>
    <property type="project" value="UniProtKB"/>
</dbReference>
<dbReference type="GO" id="GO:0004623">
    <property type="term" value="F:phospholipase A2 activity"/>
    <property type="evidence" value="ECO:0000304"/>
    <property type="project" value="Reactome"/>
</dbReference>
<dbReference type="GO" id="GO:0019369">
    <property type="term" value="P:arachidonate metabolic process"/>
    <property type="evidence" value="ECO:0000303"/>
    <property type="project" value="UniProtKB"/>
</dbReference>
<dbReference type="GO" id="GO:0019722">
    <property type="term" value="P:calcium-mediated signaling"/>
    <property type="evidence" value="ECO:0000303"/>
    <property type="project" value="UniProtKB"/>
</dbReference>
<dbReference type="GO" id="GO:0046475">
    <property type="term" value="P:glycerophospholipid catabolic process"/>
    <property type="evidence" value="ECO:0000314"/>
    <property type="project" value="UniProtKB"/>
</dbReference>
<dbReference type="GO" id="GO:0006954">
    <property type="term" value="P:inflammatory response"/>
    <property type="evidence" value="ECO:0000303"/>
    <property type="project" value="UniProtKB"/>
</dbReference>
<dbReference type="GO" id="GO:0007567">
    <property type="term" value="P:parturition"/>
    <property type="evidence" value="ECO:0000303"/>
    <property type="project" value="UniProtKB"/>
</dbReference>
<dbReference type="GO" id="GO:0036151">
    <property type="term" value="P:phosphatidylcholine acyl-chain remodeling"/>
    <property type="evidence" value="ECO:0000314"/>
    <property type="project" value="UniProtKB"/>
</dbReference>
<dbReference type="GO" id="GO:0036152">
    <property type="term" value="P:phosphatidylethanolamine acyl-chain remodeling"/>
    <property type="evidence" value="ECO:0000314"/>
    <property type="project" value="UniProtKB"/>
</dbReference>
<dbReference type="GO" id="GO:0036148">
    <property type="term" value="P:phosphatidylglycerol acyl-chain remodeling"/>
    <property type="evidence" value="ECO:0000304"/>
    <property type="project" value="Reactome"/>
</dbReference>
<dbReference type="CDD" id="cd04036">
    <property type="entry name" value="C2_cPLA2"/>
    <property type="match status" value="1"/>
</dbReference>
<dbReference type="CDD" id="cd07201">
    <property type="entry name" value="cPLA2_Grp-IVB-IVD-IVE-IVF"/>
    <property type="match status" value="1"/>
</dbReference>
<dbReference type="FunFam" id="2.60.40.150:FF:000030">
    <property type="entry name" value="Phospholipase A2"/>
    <property type="match status" value="1"/>
</dbReference>
<dbReference type="FunFam" id="3.40.1090.10:FF:000002">
    <property type="entry name" value="Phospholipase A2"/>
    <property type="match status" value="1"/>
</dbReference>
<dbReference type="Gene3D" id="2.60.40.150">
    <property type="entry name" value="C2 domain"/>
    <property type="match status" value="1"/>
</dbReference>
<dbReference type="Gene3D" id="3.40.1090.10">
    <property type="entry name" value="Cytosolic phospholipase A2 catalytic domain"/>
    <property type="match status" value="1"/>
</dbReference>
<dbReference type="InterPro" id="IPR016035">
    <property type="entry name" value="Acyl_Trfase/lysoPLipase"/>
</dbReference>
<dbReference type="InterPro" id="IPR041847">
    <property type="entry name" value="C2_cPLA2"/>
</dbReference>
<dbReference type="InterPro" id="IPR000008">
    <property type="entry name" value="C2_dom"/>
</dbReference>
<dbReference type="InterPro" id="IPR035892">
    <property type="entry name" value="C2_domain_sf"/>
</dbReference>
<dbReference type="InterPro" id="IPR040723">
    <property type="entry name" value="cPLA2_C2"/>
</dbReference>
<dbReference type="InterPro" id="IPR002642">
    <property type="entry name" value="LysoPLipase_cat_dom"/>
</dbReference>
<dbReference type="PANTHER" id="PTHR10728">
    <property type="entry name" value="CYTOSOLIC PHOSPHOLIPASE A2"/>
    <property type="match status" value="1"/>
</dbReference>
<dbReference type="PANTHER" id="PTHR10728:SF32">
    <property type="entry name" value="CYTOSOLIC PHOSPHOLIPASE A2 BETA"/>
    <property type="match status" value="1"/>
</dbReference>
<dbReference type="Pfam" id="PF00168">
    <property type="entry name" value="C2"/>
    <property type="match status" value="1"/>
</dbReference>
<dbReference type="Pfam" id="PF18695">
    <property type="entry name" value="cPLA2_C2"/>
    <property type="match status" value="1"/>
</dbReference>
<dbReference type="Pfam" id="PF01735">
    <property type="entry name" value="PLA2_B"/>
    <property type="match status" value="1"/>
</dbReference>
<dbReference type="SMART" id="SM00239">
    <property type="entry name" value="C2"/>
    <property type="match status" value="1"/>
</dbReference>
<dbReference type="SMART" id="SM00022">
    <property type="entry name" value="PLAc"/>
    <property type="match status" value="1"/>
</dbReference>
<dbReference type="SUPFAM" id="SSF49562">
    <property type="entry name" value="C2 domain (Calcium/lipid-binding domain, CaLB)"/>
    <property type="match status" value="1"/>
</dbReference>
<dbReference type="SUPFAM" id="SSF52151">
    <property type="entry name" value="FabD/lysophospholipase-like"/>
    <property type="match status" value="1"/>
</dbReference>
<dbReference type="PROSITE" id="PS50004">
    <property type="entry name" value="C2"/>
    <property type="match status" value="1"/>
</dbReference>
<dbReference type="PROSITE" id="PS51210">
    <property type="entry name" value="PLA2C"/>
    <property type="match status" value="1"/>
</dbReference>
<name>PA24B_HUMAN</name>
<gene>
    <name type="primary">PLA2G4B</name>
</gene>
<evidence type="ECO:0000250" key="1"/>
<evidence type="ECO:0000255" key="2">
    <source>
        <dbReference type="PROSITE-ProRule" id="PRU00041"/>
    </source>
</evidence>
<evidence type="ECO:0000255" key="3">
    <source>
        <dbReference type="PROSITE-ProRule" id="PRU00555"/>
    </source>
</evidence>
<evidence type="ECO:0000269" key="4">
    <source>
    </source>
</evidence>
<evidence type="ECO:0000269" key="5">
    <source>
    </source>
</evidence>
<evidence type="ECO:0000269" key="6">
    <source>
    </source>
</evidence>
<evidence type="ECO:0000269" key="7">
    <source>
    </source>
</evidence>
<evidence type="ECO:0000303" key="8">
    <source>
    </source>
</evidence>
<evidence type="ECO:0000303" key="9">
    <source>
    </source>
</evidence>
<evidence type="ECO:0000303" key="10">
    <source>
    </source>
</evidence>
<evidence type="ECO:0000303" key="11">
    <source ref="5"/>
</evidence>
<evidence type="ECO:0000305" key="12"/>
<evidence type="ECO:0000305" key="13">
    <source>
    </source>
</evidence>
<evidence type="ECO:0000305" key="14">
    <source>
    </source>
</evidence>
<evidence type="ECO:0000305" key="15">
    <source>
    </source>
</evidence>
<sequence length="781" mass="87978">MAVAEVSRTCLLTVRVLQAHRLPSKDLVTPSDCYVTLWLPTACSHRLQTRTVKNSSSPVWNQSFHFRIHRQLKNVMELKVFDQDLVTGDDPVLSVLFDAGTLRAGEFRRESFSLSPQGEGRLEVEFRLQSLADRGEWLVSNGVLVARELSCLHVQLEETGDQKSSEHRVQLVVPGSCEGPQEASVGTGTFRFHCPACWEQELSIRLQDAPEEQLKAPLSALPSGQVVRLVFPTSQEPLMRVELKKEAGLRELAVRLGFGPCAEEQAFLSRRKQVVAAALRQALQLDGDLQEDEIPVVAIMATGGGIRAMTSLYGQLAGLKELGLLDCVSYITGASGSTWALANLYEDPEWSQKDLAGPTELLKTQVTKNKLGVLAPSQLQRYRQELAERARLGYPSCFTNLWALINEALLHDEPHDHKLSDQREALSHGQNPLPIYCALNTKGQSLTTFEFGEWCEFSPYEVGFPKYGAFIPSELFGSEFFMGQLMKRLPESRICFLEGIWSNLYAANLQDSLYWASEPSQFWDRWVRNQANLDKEQVPLLKIEEPPSTAGRIAEFFTDLLTWRPLAQATHNFLRGLHFHKDYFQHPHFSTWKATTLDGLPNQLTPSEPHLCLLDVGYLINTSCLPLLQPTRDVDLILSLDYNLHGAFQQLQLLGRFCQEQGIPFPPISPSPEEQLQPRECHTFSDPTCPGAPAVLHFPLVSDSFREYSAPGVRRTPEEAAAGEVNLSSSDSPYHYTKVTYSQEDVDKLLHLTHYNVCNNQEQLLEALRQAVQRRRQRRPH</sequence>